<reference key="1">
    <citation type="journal article" date="2004" name="Nat. Genet.">
        <title>Complete sequencing and characterization of 21,243 full-length human cDNAs.</title>
        <authorList>
            <person name="Ota T."/>
            <person name="Suzuki Y."/>
            <person name="Nishikawa T."/>
            <person name="Otsuki T."/>
            <person name="Sugiyama T."/>
            <person name="Irie R."/>
            <person name="Wakamatsu A."/>
            <person name="Hayashi K."/>
            <person name="Sato H."/>
            <person name="Nagai K."/>
            <person name="Kimura K."/>
            <person name="Makita H."/>
            <person name="Sekine M."/>
            <person name="Obayashi M."/>
            <person name="Nishi T."/>
            <person name="Shibahara T."/>
            <person name="Tanaka T."/>
            <person name="Ishii S."/>
            <person name="Yamamoto J."/>
            <person name="Saito K."/>
            <person name="Kawai Y."/>
            <person name="Isono Y."/>
            <person name="Nakamura Y."/>
            <person name="Nagahari K."/>
            <person name="Murakami K."/>
            <person name="Yasuda T."/>
            <person name="Iwayanagi T."/>
            <person name="Wagatsuma M."/>
            <person name="Shiratori A."/>
            <person name="Sudo H."/>
            <person name="Hosoiri T."/>
            <person name="Kaku Y."/>
            <person name="Kodaira H."/>
            <person name="Kondo H."/>
            <person name="Sugawara M."/>
            <person name="Takahashi M."/>
            <person name="Kanda K."/>
            <person name="Yokoi T."/>
            <person name="Furuya T."/>
            <person name="Kikkawa E."/>
            <person name="Omura Y."/>
            <person name="Abe K."/>
            <person name="Kamihara K."/>
            <person name="Katsuta N."/>
            <person name="Sato K."/>
            <person name="Tanikawa M."/>
            <person name="Yamazaki M."/>
            <person name="Ninomiya K."/>
            <person name="Ishibashi T."/>
            <person name="Yamashita H."/>
            <person name="Murakawa K."/>
            <person name="Fujimori K."/>
            <person name="Tanai H."/>
            <person name="Kimata M."/>
            <person name="Watanabe M."/>
            <person name="Hiraoka S."/>
            <person name="Chiba Y."/>
            <person name="Ishida S."/>
            <person name="Ono Y."/>
            <person name="Takiguchi S."/>
            <person name="Watanabe S."/>
            <person name="Yosida M."/>
            <person name="Hotuta T."/>
            <person name="Kusano J."/>
            <person name="Kanehori K."/>
            <person name="Takahashi-Fujii A."/>
            <person name="Hara H."/>
            <person name="Tanase T.-O."/>
            <person name="Nomura Y."/>
            <person name="Togiya S."/>
            <person name="Komai F."/>
            <person name="Hara R."/>
            <person name="Takeuchi K."/>
            <person name="Arita M."/>
            <person name="Imose N."/>
            <person name="Musashino K."/>
            <person name="Yuuki H."/>
            <person name="Oshima A."/>
            <person name="Sasaki N."/>
            <person name="Aotsuka S."/>
            <person name="Yoshikawa Y."/>
            <person name="Matsunawa H."/>
            <person name="Ichihara T."/>
            <person name="Shiohata N."/>
            <person name="Sano S."/>
            <person name="Moriya S."/>
            <person name="Momiyama H."/>
            <person name="Satoh N."/>
            <person name="Takami S."/>
            <person name="Terashima Y."/>
            <person name="Suzuki O."/>
            <person name="Nakagawa S."/>
            <person name="Senoh A."/>
            <person name="Mizoguchi H."/>
            <person name="Goto Y."/>
            <person name="Shimizu F."/>
            <person name="Wakebe H."/>
            <person name="Hishigaki H."/>
            <person name="Watanabe T."/>
            <person name="Sugiyama A."/>
            <person name="Takemoto M."/>
            <person name="Kawakami B."/>
            <person name="Yamazaki M."/>
            <person name="Watanabe K."/>
            <person name="Kumagai A."/>
            <person name="Itakura S."/>
            <person name="Fukuzumi Y."/>
            <person name="Fujimori Y."/>
            <person name="Komiyama M."/>
            <person name="Tashiro H."/>
            <person name="Tanigami A."/>
            <person name="Fujiwara T."/>
            <person name="Ono T."/>
            <person name="Yamada K."/>
            <person name="Fujii Y."/>
            <person name="Ozaki K."/>
            <person name="Hirao M."/>
            <person name="Ohmori Y."/>
            <person name="Kawabata A."/>
            <person name="Hikiji T."/>
            <person name="Kobatake N."/>
            <person name="Inagaki H."/>
            <person name="Ikema Y."/>
            <person name="Okamoto S."/>
            <person name="Okitani R."/>
            <person name="Kawakami T."/>
            <person name="Noguchi S."/>
            <person name="Itoh T."/>
            <person name="Shigeta K."/>
            <person name="Senba T."/>
            <person name="Matsumura K."/>
            <person name="Nakajima Y."/>
            <person name="Mizuno T."/>
            <person name="Morinaga M."/>
            <person name="Sasaki M."/>
            <person name="Togashi T."/>
            <person name="Oyama M."/>
            <person name="Hata H."/>
            <person name="Watanabe M."/>
            <person name="Komatsu T."/>
            <person name="Mizushima-Sugano J."/>
            <person name="Satoh T."/>
            <person name="Shirai Y."/>
            <person name="Takahashi Y."/>
            <person name="Nakagawa K."/>
            <person name="Okumura K."/>
            <person name="Nagase T."/>
            <person name="Nomura N."/>
            <person name="Kikuchi H."/>
            <person name="Masuho Y."/>
            <person name="Yamashita R."/>
            <person name="Nakai K."/>
            <person name="Yada T."/>
            <person name="Nakamura Y."/>
            <person name="Ohara O."/>
            <person name="Isogai T."/>
            <person name="Sugano S."/>
        </authorList>
    </citation>
    <scope>NUCLEOTIDE SEQUENCE [LARGE SCALE MRNA] (ISOFORM 2)</scope>
    <scope>VARIANT ILE-442</scope>
    <source>
        <tissue>Brain</tissue>
    </source>
</reference>
<reference key="2">
    <citation type="journal article" date="2006" name="Nature">
        <title>DNA sequence of human chromosome 17 and analysis of rearrangement in the human lineage.</title>
        <authorList>
            <person name="Zody M.C."/>
            <person name="Garber M."/>
            <person name="Adams D.J."/>
            <person name="Sharpe T."/>
            <person name="Harrow J."/>
            <person name="Lupski J.R."/>
            <person name="Nicholson C."/>
            <person name="Searle S.M."/>
            <person name="Wilming L."/>
            <person name="Young S.K."/>
            <person name="Abouelleil A."/>
            <person name="Allen N.R."/>
            <person name="Bi W."/>
            <person name="Bloom T."/>
            <person name="Borowsky M.L."/>
            <person name="Bugalter B.E."/>
            <person name="Butler J."/>
            <person name="Chang J.L."/>
            <person name="Chen C.-K."/>
            <person name="Cook A."/>
            <person name="Corum B."/>
            <person name="Cuomo C.A."/>
            <person name="de Jong P.J."/>
            <person name="DeCaprio D."/>
            <person name="Dewar K."/>
            <person name="FitzGerald M."/>
            <person name="Gilbert J."/>
            <person name="Gibson R."/>
            <person name="Gnerre S."/>
            <person name="Goldstein S."/>
            <person name="Grafham D.V."/>
            <person name="Grocock R."/>
            <person name="Hafez N."/>
            <person name="Hagopian D.S."/>
            <person name="Hart E."/>
            <person name="Norman C.H."/>
            <person name="Humphray S."/>
            <person name="Jaffe D.B."/>
            <person name="Jones M."/>
            <person name="Kamal M."/>
            <person name="Khodiyar V.K."/>
            <person name="LaButti K."/>
            <person name="Laird G."/>
            <person name="Lehoczky J."/>
            <person name="Liu X."/>
            <person name="Lokyitsang T."/>
            <person name="Loveland J."/>
            <person name="Lui A."/>
            <person name="Macdonald P."/>
            <person name="Major J.E."/>
            <person name="Matthews L."/>
            <person name="Mauceli E."/>
            <person name="McCarroll S.A."/>
            <person name="Mihalev A.H."/>
            <person name="Mudge J."/>
            <person name="Nguyen C."/>
            <person name="Nicol R."/>
            <person name="O'Leary S.B."/>
            <person name="Osoegawa K."/>
            <person name="Schwartz D.C."/>
            <person name="Shaw-Smith C."/>
            <person name="Stankiewicz P."/>
            <person name="Steward C."/>
            <person name="Swarbreck D."/>
            <person name="Venkataraman V."/>
            <person name="Whittaker C.A."/>
            <person name="Yang X."/>
            <person name="Zimmer A.R."/>
            <person name="Bradley A."/>
            <person name="Hubbard T."/>
            <person name="Birren B.W."/>
            <person name="Rogers J."/>
            <person name="Lander E.S."/>
            <person name="Nusbaum C."/>
        </authorList>
    </citation>
    <scope>NUCLEOTIDE SEQUENCE [LARGE SCALE GENOMIC DNA]</scope>
</reference>
<keyword id="KW-0025">Alternative splicing</keyword>
<keyword id="KW-0040">ANK repeat</keyword>
<keyword id="KW-1267">Proteomics identification</keyword>
<keyword id="KW-1185">Reference proteome</keyword>
<keyword id="KW-0677">Repeat</keyword>
<gene>
    <name evidence="5" type="primary">ANKFN1</name>
</gene>
<evidence type="ECO:0000250" key="1">
    <source>
        <dbReference type="UniProtKB" id="A0A571BF63"/>
    </source>
</evidence>
<evidence type="ECO:0000255" key="2">
    <source>
        <dbReference type="PROSITE-ProRule" id="PRU00316"/>
    </source>
</evidence>
<evidence type="ECO:0000256" key="3">
    <source>
        <dbReference type="SAM" id="MobiDB-lite"/>
    </source>
</evidence>
<evidence type="ECO:0000269" key="4">
    <source>
    </source>
</evidence>
<evidence type="ECO:0000312" key="5">
    <source>
        <dbReference type="HGNC" id="HGNC:26766"/>
    </source>
</evidence>
<comment type="function">
    <text evidence="1">May play a role in neuronal function.</text>
</comment>
<comment type="alternative products">
    <event type="alternative splicing"/>
    <isoform>
        <id>Q8N957-1</id>
        <name>1</name>
        <sequence type="displayed"/>
    </isoform>
    <isoform>
        <id>Q8N957-2</id>
        <name>2</name>
        <sequence type="described" ref="VSP_061839 VSP_061840 VSP_061841"/>
    </isoform>
</comment>
<accession>Q8N957</accession>
<accession>A0A804HJ58</accession>
<organism>
    <name type="scientific">Homo sapiens</name>
    <name type="common">Human</name>
    <dbReference type="NCBI Taxonomy" id="9606"/>
    <lineage>
        <taxon>Eukaryota</taxon>
        <taxon>Metazoa</taxon>
        <taxon>Chordata</taxon>
        <taxon>Craniata</taxon>
        <taxon>Vertebrata</taxon>
        <taxon>Euteleostomi</taxon>
        <taxon>Mammalia</taxon>
        <taxon>Eutheria</taxon>
        <taxon>Euarchontoglires</taxon>
        <taxon>Primates</taxon>
        <taxon>Haplorrhini</taxon>
        <taxon>Catarrhini</taxon>
        <taxon>Hominidae</taxon>
        <taxon>Homo</taxon>
    </lineage>
</organism>
<proteinExistence type="evidence at protein level"/>
<sequence>MNEKRLLFKDRHFTCSKIIGRRFACFAQRLSHRRKQSQCDLLNESTGQLPTTCSSAASNSINWNCRVKMTQQMQNLHLCQSKKHSAPSSPNAAKRLYRNLSEKLKGSHSSFDEAYFRTRTDRLSLRKTSVNFQGNEAMFEAVEQQDMDAVQILLYQYTPEELDLNTPNSEGLTPLDIAIMTNNVPIARILLRTGARESPHFVSLESRAMHLNTLVQEAQERVSELSAQVENEGFTLDNTEKEKQLKAWEWRYRLYRRMKTGFEHARAPEMPTNVCLMVTSSTSLTVSFQEPLSVNAAVVTRYKVEWSMSEDFSPLAGEIIMDNLQTLRCTITGLTMGQQYFVQVSAYNMKGWGPAQTTTPACASPSNWKDYDDREPRHKGQSEVLEGLLQQVRALHQHYSCRESTKLQTTGRKQSVSRSLKHLFHSSNKFVKTLKRGLYIAVIFYYKDNILVTNEDQVPIVEIDDSHTSSITQDFLWFTKLSCMWEDIRWLRQSIPISSSSSTVLQTRQKMLAATAQLQNLLGTHNLGRVYYEPIKDRHGNILIVTIREVEMLYSFFNGKWMQISKLQSQRKSLSTPEEPTALDILLITIQDILSYHKRSHQRLFPGLYLGYLKLCSSVDQIKVLVTQKLPNILCHVKIRENNNISREEWEWIQKLSGSESMESVDHTSDCPMQLFFYELQMAVKALLQQINIPLHQARNFRLYTQEVLEMGHNVSFLLLLPASDDVCTAPGQNNPYTPHSGFLNLPLQMFELVHFCSYREKFISLYCRLSAVVELDSLNTQQSLREAISDSEVAAAKQRHQQVLDFIQQIDEVWREMRWIMDALQYARYKQPVSGLPITKLIDPSDEQSLKKINSTSSSHIDCLPSPPPSPEMHRRKTVSDSQPCSDEEACSEVFLPTNSDYDSSDALSPRDLDLVYLSSHDIAQQTLSGLSGSAPDVLQVHDVKTPLGPGQDPQGEGPNPDHSCAEFLHSLTLTGFTPKNHAKTVSGGRPPLGFLGKRKPGKHPHYGGFSRHHRWLRIHSETQSLSLSEGIYTQHLSQACGLAQEPKEAKRAGPALDDPRGLTLAHAASLPEERNSSLQDARPSVRRLYVEPYAAAVVAQDEKPWASLSPPSGGRITLPSPTGPDVSQEGPTASPMSEILSSML</sequence>
<name>ANKF1_HUMAN</name>
<dbReference type="EMBL" id="AK095654">
    <property type="protein sequence ID" value="BAC04599.1"/>
    <property type="molecule type" value="mRNA"/>
</dbReference>
<dbReference type="EMBL" id="AC006600">
    <property type="status" value="NOT_ANNOTATED_CDS"/>
    <property type="molecule type" value="Genomic_DNA"/>
</dbReference>
<dbReference type="EMBL" id="AC006925">
    <property type="status" value="NOT_ANNOTATED_CDS"/>
    <property type="molecule type" value="Genomic_DNA"/>
</dbReference>
<dbReference type="EMBL" id="AC015724">
    <property type="status" value="NOT_ANNOTATED_CDS"/>
    <property type="molecule type" value="Genomic_DNA"/>
</dbReference>
<dbReference type="EMBL" id="AC011073">
    <property type="status" value="NOT_ANNOTATED_CDS"/>
    <property type="molecule type" value="Genomic_DNA"/>
</dbReference>
<dbReference type="EMBL" id="AC090618">
    <property type="status" value="NOT_ANNOTATED_CDS"/>
    <property type="molecule type" value="Genomic_DNA"/>
</dbReference>
<dbReference type="CCDS" id="CCDS32686.1">
    <molecule id="Q8N957-2"/>
</dbReference>
<dbReference type="CCDS" id="CCDS92363.1">
    <molecule id="Q8N957-1"/>
</dbReference>
<dbReference type="RefSeq" id="NP_001357255.1">
    <molecule id="Q8N957-1"/>
    <property type="nucleotide sequence ID" value="NM_001370326.1"/>
</dbReference>
<dbReference type="RefSeq" id="NP_694960.2">
    <molecule id="Q8N957-2"/>
    <property type="nucleotide sequence ID" value="NM_153228.3"/>
</dbReference>
<dbReference type="FunCoup" id="Q8N957">
    <property type="interactions" value="22"/>
</dbReference>
<dbReference type="STRING" id="9606.ENSP00000321627"/>
<dbReference type="GlyGen" id="Q8N957">
    <property type="glycosylation" value="1 site"/>
</dbReference>
<dbReference type="iPTMnet" id="Q8N957"/>
<dbReference type="PhosphoSitePlus" id="Q8N957"/>
<dbReference type="BioMuta" id="ANKFN1"/>
<dbReference type="DMDM" id="269849542"/>
<dbReference type="MassIVE" id="Q8N957"/>
<dbReference type="PaxDb" id="9606-ENSP00000321627"/>
<dbReference type="PeptideAtlas" id="Q8N957"/>
<dbReference type="ProteomicsDB" id="72490"/>
<dbReference type="Antibodypedia" id="18285">
    <property type="antibodies" value="20 antibodies from 8 providers"/>
</dbReference>
<dbReference type="DNASU" id="162282"/>
<dbReference type="Ensembl" id="ENST00000318698.6">
    <molecule id="Q8N957-2"/>
    <property type="protein sequence ID" value="ENSP00000321627.2"/>
    <property type="gene ID" value="ENSG00000153930.13"/>
</dbReference>
<dbReference type="Ensembl" id="ENST00000682825.1">
    <molecule id="Q8N957-1"/>
    <property type="protein sequence ID" value="ENSP00000507365.1"/>
    <property type="gene ID" value="ENSG00000153930.13"/>
</dbReference>
<dbReference type="GeneID" id="162282"/>
<dbReference type="KEGG" id="hsa:162282"/>
<dbReference type="MANE-Select" id="ENST00000682825.1">
    <property type="protein sequence ID" value="ENSP00000507365.1"/>
    <property type="RefSeq nucleotide sequence ID" value="NM_001370326.1"/>
    <property type="RefSeq protein sequence ID" value="NP_001357255.1"/>
</dbReference>
<dbReference type="UCSC" id="uc002iun.1">
    <molecule id="Q8N957-1"/>
    <property type="organism name" value="human"/>
</dbReference>
<dbReference type="AGR" id="HGNC:26766"/>
<dbReference type="CTD" id="162282"/>
<dbReference type="DisGeNET" id="162282"/>
<dbReference type="GeneCards" id="ANKFN1"/>
<dbReference type="HGNC" id="HGNC:26766">
    <property type="gene designation" value="ANKFN1"/>
</dbReference>
<dbReference type="HPA" id="ENSG00000153930">
    <property type="expression patterns" value="Tissue enhanced (cervix, fallopian tube)"/>
</dbReference>
<dbReference type="MIM" id="620853">
    <property type="type" value="gene"/>
</dbReference>
<dbReference type="neXtProt" id="NX_Q8N957"/>
<dbReference type="OpenTargets" id="ENSG00000153930"/>
<dbReference type="PharmGKB" id="PA142672624"/>
<dbReference type="VEuPathDB" id="HostDB:ENSG00000153930"/>
<dbReference type="eggNOG" id="KOG4485">
    <property type="taxonomic scope" value="Eukaryota"/>
</dbReference>
<dbReference type="GeneTree" id="ENSGT00940000159856"/>
<dbReference type="HOGENOM" id="CLU_010667_0_0_1"/>
<dbReference type="InParanoid" id="Q8N957"/>
<dbReference type="OMA" id="SINWNCC"/>
<dbReference type="OrthoDB" id="2428204at2759"/>
<dbReference type="PAN-GO" id="Q8N957">
    <property type="GO annotations" value="3 GO annotations based on evolutionary models"/>
</dbReference>
<dbReference type="PhylomeDB" id="Q8N957"/>
<dbReference type="TreeFam" id="TF314968"/>
<dbReference type="PathwayCommons" id="Q8N957"/>
<dbReference type="SignaLink" id="Q8N957"/>
<dbReference type="BioGRID-ORCS" id="162282">
    <property type="hits" value="12 hits in 1144 CRISPR screens"/>
</dbReference>
<dbReference type="ChiTaRS" id="ANKFN1">
    <property type="organism name" value="human"/>
</dbReference>
<dbReference type="GenomeRNAi" id="162282"/>
<dbReference type="Pharos" id="Q8N957">
    <property type="development level" value="Tdark"/>
</dbReference>
<dbReference type="PRO" id="PR:Q8N957"/>
<dbReference type="Proteomes" id="UP000005640">
    <property type="component" value="Chromosome 17"/>
</dbReference>
<dbReference type="RNAct" id="Q8N957">
    <property type="molecule type" value="protein"/>
</dbReference>
<dbReference type="Bgee" id="ENSG00000153930">
    <property type="expression patterns" value="Expressed in buccal mucosa cell and 122 other cell types or tissues"/>
</dbReference>
<dbReference type="ExpressionAtlas" id="Q8N957">
    <property type="expression patterns" value="baseline and differential"/>
</dbReference>
<dbReference type="GO" id="GO:0005819">
    <property type="term" value="C:spindle"/>
    <property type="evidence" value="ECO:0000318"/>
    <property type="project" value="GO_Central"/>
</dbReference>
<dbReference type="GO" id="GO:0001662">
    <property type="term" value="P:behavioral fear response"/>
    <property type="evidence" value="ECO:0007669"/>
    <property type="project" value="Ensembl"/>
</dbReference>
<dbReference type="GO" id="GO:0050957">
    <property type="term" value="P:equilibrioception"/>
    <property type="evidence" value="ECO:0007669"/>
    <property type="project" value="Ensembl"/>
</dbReference>
<dbReference type="GO" id="GO:0000132">
    <property type="term" value="P:establishment of mitotic spindle orientation"/>
    <property type="evidence" value="ECO:0000318"/>
    <property type="project" value="GO_Central"/>
</dbReference>
<dbReference type="GO" id="GO:0045475">
    <property type="term" value="P:locomotor rhythm"/>
    <property type="evidence" value="ECO:0007669"/>
    <property type="project" value="Ensembl"/>
</dbReference>
<dbReference type="GO" id="GO:0061172">
    <property type="term" value="P:regulation of establishment of bipolar cell polarity"/>
    <property type="evidence" value="ECO:0000318"/>
    <property type="project" value="GO_Central"/>
</dbReference>
<dbReference type="CDD" id="cd00063">
    <property type="entry name" value="FN3"/>
    <property type="match status" value="1"/>
</dbReference>
<dbReference type="FunFam" id="1.25.40.20:FF:000296">
    <property type="entry name" value="Ankyrin repeat and fibronectin type III domain containing 1"/>
    <property type="match status" value="1"/>
</dbReference>
<dbReference type="FunFam" id="2.60.40.10:FF:000905">
    <property type="entry name" value="Ankyrin repeat and fibronectin type III domain containing 1"/>
    <property type="match status" value="1"/>
</dbReference>
<dbReference type="Gene3D" id="1.25.40.20">
    <property type="entry name" value="Ankyrin repeat-containing domain"/>
    <property type="match status" value="1"/>
</dbReference>
<dbReference type="Gene3D" id="2.60.40.10">
    <property type="entry name" value="Immunoglobulins"/>
    <property type="match status" value="1"/>
</dbReference>
<dbReference type="InterPro" id="IPR039269">
    <property type="entry name" value="ANKFN1"/>
</dbReference>
<dbReference type="InterPro" id="IPR002110">
    <property type="entry name" value="Ankyrin_rpt"/>
</dbReference>
<dbReference type="InterPro" id="IPR036770">
    <property type="entry name" value="Ankyrin_rpt-contain_sf"/>
</dbReference>
<dbReference type="InterPro" id="IPR003961">
    <property type="entry name" value="FN3_dom"/>
</dbReference>
<dbReference type="InterPro" id="IPR036116">
    <property type="entry name" value="FN3_sf"/>
</dbReference>
<dbReference type="InterPro" id="IPR013783">
    <property type="entry name" value="Ig-like_fold"/>
</dbReference>
<dbReference type="PANTHER" id="PTHR21437:SF3">
    <property type="entry name" value="ANKYRIN REPEAT AND FIBRONECTIN TYPE-III DOMAIN-CONTAINING PROTEIN 1"/>
    <property type="match status" value="1"/>
</dbReference>
<dbReference type="PANTHER" id="PTHR21437">
    <property type="entry name" value="WIDE AWAKE"/>
    <property type="match status" value="1"/>
</dbReference>
<dbReference type="Pfam" id="PF00041">
    <property type="entry name" value="fn3"/>
    <property type="match status" value="1"/>
</dbReference>
<dbReference type="SMART" id="SM00248">
    <property type="entry name" value="ANK"/>
    <property type="match status" value="2"/>
</dbReference>
<dbReference type="SMART" id="SM00060">
    <property type="entry name" value="FN3"/>
    <property type="match status" value="1"/>
</dbReference>
<dbReference type="SUPFAM" id="SSF48403">
    <property type="entry name" value="Ankyrin repeat"/>
    <property type="match status" value="1"/>
</dbReference>
<dbReference type="SUPFAM" id="SSF49265">
    <property type="entry name" value="Fibronectin type III"/>
    <property type="match status" value="1"/>
</dbReference>
<dbReference type="PROSITE" id="PS50297">
    <property type="entry name" value="ANK_REP_REGION"/>
    <property type="match status" value="1"/>
</dbReference>
<dbReference type="PROSITE" id="PS50088">
    <property type="entry name" value="ANK_REPEAT"/>
    <property type="match status" value="1"/>
</dbReference>
<dbReference type="PROSITE" id="PS50853">
    <property type="entry name" value="FN3"/>
    <property type="match status" value="1"/>
</dbReference>
<feature type="chain" id="PRO_0000247138" description="Ankyrin repeat and fibronectin type-III domain-containing protein 1">
    <location>
        <begin position="1"/>
        <end position="1146"/>
    </location>
</feature>
<feature type="repeat" description="ANK 1">
    <location>
        <begin position="133"/>
        <end position="162"/>
    </location>
</feature>
<feature type="repeat" description="ANK 2">
    <location>
        <begin position="170"/>
        <end position="199"/>
    </location>
</feature>
<feature type="domain" description="Fibronectin type-III" evidence="2">
    <location>
        <begin position="270"/>
        <end position="366"/>
    </location>
</feature>
<feature type="region of interest" description="Highly conserved peptide sequence" evidence="1">
    <location>
        <begin position="607"/>
        <end position="614"/>
    </location>
</feature>
<feature type="region of interest" description="Disordered" evidence="3">
    <location>
        <begin position="855"/>
        <end position="887"/>
    </location>
</feature>
<feature type="region of interest" description="Disordered" evidence="3">
    <location>
        <begin position="945"/>
        <end position="964"/>
    </location>
</feature>
<feature type="region of interest" description="Disordered" evidence="3">
    <location>
        <begin position="1106"/>
        <end position="1146"/>
    </location>
</feature>
<feature type="compositionally biased region" description="Polar residues" evidence="3">
    <location>
        <begin position="1131"/>
        <end position="1146"/>
    </location>
</feature>
<feature type="splice variant" id="VSP_061839" description="In isoform 2.">
    <original>MNEK</original>
    <variation>MEASLTR</variation>
    <location>
        <begin position="1"/>
        <end position="4"/>
    </location>
</feature>
<feature type="splice variant" id="VSP_061840" description="In isoform 2.">
    <original>VHFCSYR</original>
    <variation>GIVACFT</variation>
    <location>
        <begin position="754"/>
        <end position="760"/>
    </location>
</feature>
<feature type="splice variant" id="VSP_061841" description="In isoform 2.">
    <location>
        <begin position="761"/>
        <end position="1146"/>
    </location>
</feature>
<feature type="sequence variant" id="VAR_060725" description="In dbSNP:rs10852985." evidence="4">
    <original>V</original>
    <variation>I</variation>
    <location>
        <position position="442"/>
    </location>
</feature>
<protein>
    <recommendedName>
        <fullName>Ankyrin repeat and fibronectin type-III domain-containing protein 1</fullName>
    </recommendedName>
</protein>